<name>HSLV_LISMC</name>
<evidence type="ECO:0000255" key="1">
    <source>
        <dbReference type="HAMAP-Rule" id="MF_00248"/>
    </source>
</evidence>
<reference key="1">
    <citation type="journal article" date="2012" name="BMC Genomics">
        <title>Comparative genomics and transcriptomics of lineages I, II, and III strains of Listeria monocytogenes.</title>
        <authorList>
            <person name="Hain T."/>
            <person name="Ghai R."/>
            <person name="Billion A."/>
            <person name="Kuenne C.T."/>
            <person name="Steinweg C."/>
            <person name="Izar B."/>
            <person name="Mohamed W."/>
            <person name="Mraheil M."/>
            <person name="Domann E."/>
            <person name="Schaffrath S."/>
            <person name="Karst U."/>
            <person name="Goesmann A."/>
            <person name="Oehm S."/>
            <person name="Puhler A."/>
            <person name="Merkl R."/>
            <person name="Vorwerk S."/>
            <person name="Glaser P."/>
            <person name="Garrido P."/>
            <person name="Rusniok C."/>
            <person name="Buchrieser C."/>
            <person name="Goebel W."/>
            <person name="Chakraborty T."/>
        </authorList>
    </citation>
    <scope>NUCLEOTIDE SEQUENCE [LARGE SCALE GENOMIC DNA]</scope>
    <source>
        <strain>CLIP80459</strain>
    </source>
</reference>
<comment type="function">
    <text evidence="1">Protease subunit of a proteasome-like degradation complex believed to be a general protein degrading machinery.</text>
</comment>
<comment type="catalytic activity">
    <reaction evidence="1">
        <text>ATP-dependent cleavage of peptide bonds with broad specificity.</text>
        <dbReference type="EC" id="3.4.25.2"/>
    </reaction>
</comment>
<comment type="activity regulation">
    <text evidence="1">Allosterically activated by HslU binding.</text>
</comment>
<comment type="subunit">
    <text evidence="1">A double ring-shaped homohexamer of HslV is capped on each side by a ring-shaped HslU homohexamer. The assembly of the HslU/HslV complex is dependent on binding of ATP.</text>
</comment>
<comment type="subcellular location">
    <subcellularLocation>
        <location evidence="1">Cytoplasm</location>
    </subcellularLocation>
</comment>
<comment type="similarity">
    <text evidence="1">Belongs to the peptidase T1B family. HslV subfamily.</text>
</comment>
<accession>C1L2I6</accession>
<dbReference type="EC" id="3.4.25.2" evidence="1"/>
<dbReference type="EMBL" id="FM242711">
    <property type="protein sequence ID" value="CAS05052.1"/>
    <property type="molecule type" value="Genomic_DNA"/>
</dbReference>
<dbReference type="RefSeq" id="WP_003724001.1">
    <property type="nucleotide sequence ID" value="NC_012488.1"/>
</dbReference>
<dbReference type="SMR" id="C1L2I6"/>
<dbReference type="MEROPS" id="T01.007"/>
<dbReference type="GeneID" id="93239152"/>
<dbReference type="KEGG" id="lmc:Lm4b_01288"/>
<dbReference type="HOGENOM" id="CLU_093872_1_1_9"/>
<dbReference type="GO" id="GO:0009376">
    <property type="term" value="C:HslUV protease complex"/>
    <property type="evidence" value="ECO:0007669"/>
    <property type="project" value="UniProtKB-UniRule"/>
</dbReference>
<dbReference type="GO" id="GO:0005839">
    <property type="term" value="C:proteasome core complex"/>
    <property type="evidence" value="ECO:0007669"/>
    <property type="project" value="InterPro"/>
</dbReference>
<dbReference type="GO" id="GO:0046872">
    <property type="term" value="F:metal ion binding"/>
    <property type="evidence" value="ECO:0007669"/>
    <property type="project" value="UniProtKB-KW"/>
</dbReference>
<dbReference type="GO" id="GO:0004298">
    <property type="term" value="F:threonine-type endopeptidase activity"/>
    <property type="evidence" value="ECO:0007669"/>
    <property type="project" value="UniProtKB-KW"/>
</dbReference>
<dbReference type="GO" id="GO:0051603">
    <property type="term" value="P:proteolysis involved in protein catabolic process"/>
    <property type="evidence" value="ECO:0007669"/>
    <property type="project" value="InterPro"/>
</dbReference>
<dbReference type="CDD" id="cd01913">
    <property type="entry name" value="protease_HslV"/>
    <property type="match status" value="1"/>
</dbReference>
<dbReference type="FunFam" id="3.60.20.10:FF:000002">
    <property type="entry name" value="ATP-dependent protease subunit HslV"/>
    <property type="match status" value="1"/>
</dbReference>
<dbReference type="Gene3D" id="3.60.20.10">
    <property type="entry name" value="Glutamine Phosphoribosylpyrophosphate, subunit 1, domain 1"/>
    <property type="match status" value="1"/>
</dbReference>
<dbReference type="HAMAP" id="MF_00248">
    <property type="entry name" value="HslV"/>
    <property type="match status" value="1"/>
</dbReference>
<dbReference type="InterPro" id="IPR022281">
    <property type="entry name" value="ATP-dep_Prtase_HsIV_su"/>
</dbReference>
<dbReference type="InterPro" id="IPR029055">
    <property type="entry name" value="Ntn_hydrolases_N"/>
</dbReference>
<dbReference type="InterPro" id="IPR001353">
    <property type="entry name" value="Proteasome_sua/b"/>
</dbReference>
<dbReference type="InterPro" id="IPR023333">
    <property type="entry name" value="Proteasome_suB-type"/>
</dbReference>
<dbReference type="NCBIfam" id="TIGR03692">
    <property type="entry name" value="ATP_dep_HslV"/>
    <property type="match status" value="1"/>
</dbReference>
<dbReference type="NCBIfam" id="NF003964">
    <property type="entry name" value="PRK05456.1"/>
    <property type="match status" value="1"/>
</dbReference>
<dbReference type="PANTHER" id="PTHR32194:SF0">
    <property type="entry name" value="ATP-DEPENDENT PROTEASE SUBUNIT HSLV"/>
    <property type="match status" value="1"/>
</dbReference>
<dbReference type="PANTHER" id="PTHR32194">
    <property type="entry name" value="METALLOPROTEASE TLDD"/>
    <property type="match status" value="1"/>
</dbReference>
<dbReference type="Pfam" id="PF00227">
    <property type="entry name" value="Proteasome"/>
    <property type="match status" value="1"/>
</dbReference>
<dbReference type="PIRSF" id="PIRSF039093">
    <property type="entry name" value="HslV"/>
    <property type="match status" value="1"/>
</dbReference>
<dbReference type="SUPFAM" id="SSF56235">
    <property type="entry name" value="N-terminal nucleophile aminohydrolases (Ntn hydrolases)"/>
    <property type="match status" value="1"/>
</dbReference>
<dbReference type="PROSITE" id="PS51476">
    <property type="entry name" value="PROTEASOME_BETA_2"/>
    <property type="match status" value="1"/>
</dbReference>
<gene>
    <name evidence="1" type="primary">hslV</name>
    <name type="ordered locus">Lm4b_01288</name>
</gene>
<sequence length="179" mass="19406">MELHATTIFAVQHDGKAAMAGDGQVTLGESVVMKHTAKKVRRLFHDKVIAGFAGSVADAFTLFEKFEAKLNEYNGNLERASVELAQQWRSDSVLRKLEAMLIVMDKDTLLLVSGTGEVIEPDDGILAIGSGGNYALAAGRALKRHNGGQMEAKDIARHALEIASEICVFTNDHITVEEL</sequence>
<organism>
    <name type="scientific">Listeria monocytogenes serotype 4b (strain CLIP80459)</name>
    <dbReference type="NCBI Taxonomy" id="568819"/>
    <lineage>
        <taxon>Bacteria</taxon>
        <taxon>Bacillati</taxon>
        <taxon>Bacillota</taxon>
        <taxon>Bacilli</taxon>
        <taxon>Bacillales</taxon>
        <taxon>Listeriaceae</taxon>
        <taxon>Listeria</taxon>
    </lineage>
</organism>
<protein>
    <recommendedName>
        <fullName evidence="1">ATP-dependent protease subunit HslV</fullName>
        <ecNumber evidence="1">3.4.25.2</ecNumber>
    </recommendedName>
</protein>
<proteinExistence type="inferred from homology"/>
<keyword id="KW-0021">Allosteric enzyme</keyword>
<keyword id="KW-0963">Cytoplasm</keyword>
<keyword id="KW-0378">Hydrolase</keyword>
<keyword id="KW-0479">Metal-binding</keyword>
<keyword id="KW-0645">Protease</keyword>
<keyword id="KW-0915">Sodium</keyword>
<keyword id="KW-0888">Threonine protease</keyword>
<feature type="chain" id="PRO_1000204510" description="ATP-dependent protease subunit HslV">
    <location>
        <begin position="1"/>
        <end position="179"/>
    </location>
</feature>
<feature type="active site" evidence="1">
    <location>
        <position position="6"/>
    </location>
</feature>
<feature type="binding site" evidence="1">
    <location>
        <position position="164"/>
    </location>
    <ligand>
        <name>Na(+)</name>
        <dbReference type="ChEBI" id="CHEBI:29101"/>
    </ligand>
</feature>
<feature type="binding site" evidence="1">
    <location>
        <position position="167"/>
    </location>
    <ligand>
        <name>Na(+)</name>
        <dbReference type="ChEBI" id="CHEBI:29101"/>
    </ligand>
</feature>
<feature type="binding site" evidence="1">
    <location>
        <position position="170"/>
    </location>
    <ligand>
        <name>Na(+)</name>
        <dbReference type="ChEBI" id="CHEBI:29101"/>
    </ligand>
</feature>